<keyword id="KW-1003">Cell membrane</keyword>
<keyword id="KW-0472">Membrane</keyword>
<keyword id="KW-1185">Reference proteome</keyword>
<keyword id="KW-0812">Transmembrane</keyword>
<keyword id="KW-1133">Transmembrane helix</keyword>
<protein>
    <recommendedName>
        <fullName evidence="1">UPF0397 protein Ldb1710</fullName>
    </recommendedName>
</protein>
<organism>
    <name type="scientific">Lactobacillus delbrueckii subsp. bulgaricus (strain ATCC 11842 / DSM 20081 / BCRC 10696 / JCM 1002 / NBRC 13953 / NCIMB 11778 / NCTC 12712 / WDCM 00102 / Lb 14)</name>
    <dbReference type="NCBI Taxonomy" id="390333"/>
    <lineage>
        <taxon>Bacteria</taxon>
        <taxon>Bacillati</taxon>
        <taxon>Bacillota</taxon>
        <taxon>Bacilli</taxon>
        <taxon>Lactobacillales</taxon>
        <taxon>Lactobacillaceae</taxon>
        <taxon>Lactobacillus</taxon>
    </lineage>
</organism>
<comment type="subcellular location">
    <subcellularLocation>
        <location evidence="1">Cell membrane</location>
        <topology evidence="1">Multi-pass membrane protein</topology>
    </subcellularLocation>
</comment>
<comment type="similarity">
    <text evidence="1">Belongs to the UPF0397 family.</text>
</comment>
<feature type="chain" id="PRO_0000260794" description="UPF0397 protein Ldb1710">
    <location>
        <begin position="1"/>
        <end position="186"/>
    </location>
</feature>
<feature type="transmembrane region" description="Helical" evidence="1">
    <location>
        <begin position="13"/>
        <end position="33"/>
    </location>
</feature>
<feature type="transmembrane region" description="Helical" evidence="1">
    <location>
        <begin position="46"/>
        <end position="66"/>
    </location>
</feature>
<feature type="transmembrane region" description="Helical" evidence="1">
    <location>
        <begin position="79"/>
        <end position="99"/>
    </location>
</feature>
<feature type="transmembrane region" description="Helical" evidence="1">
    <location>
        <begin position="114"/>
        <end position="134"/>
    </location>
</feature>
<feature type="transmembrane region" description="Helical" evidence="1">
    <location>
        <begin position="150"/>
        <end position="170"/>
    </location>
</feature>
<name>Y1710_LACDA</name>
<gene>
    <name type="ordered locus">Ldb1710</name>
</gene>
<reference key="1">
    <citation type="journal article" date="2006" name="Proc. Natl. Acad. Sci. U.S.A.">
        <title>The complete genome sequence of Lactobacillus bulgaricus reveals extensive and ongoing reductive evolution.</title>
        <authorList>
            <person name="van de Guchte M."/>
            <person name="Penaud S."/>
            <person name="Grimaldi C."/>
            <person name="Barbe V."/>
            <person name="Bryson K."/>
            <person name="Nicolas P."/>
            <person name="Robert C."/>
            <person name="Oztas S."/>
            <person name="Mangenot S."/>
            <person name="Couloux A."/>
            <person name="Loux V."/>
            <person name="Dervyn R."/>
            <person name="Bossy R."/>
            <person name="Bolotin A."/>
            <person name="Batto J.-M."/>
            <person name="Walunas T."/>
            <person name="Gibrat J.-F."/>
            <person name="Bessieres P."/>
            <person name="Weissenbach J."/>
            <person name="Ehrlich S.D."/>
            <person name="Maguin E."/>
        </authorList>
    </citation>
    <scope>NUCLEOTIDE SEQUENCE [LARGE SCALE GENOMIC DNA]</scope>
    <source>
        <strain>ATCC 11842 / DSM 20081 / BCRC 10696 / JCM 1002 / NBRC 13953 / NCIMB 11778 / NCTC 12712 / WDCM 00102 / Lb 14</strain>
    </source>
</reference>
<evidence type="ECO:0000255" key="1">
    <source>
        <dbReference type="HAMAP-Rule" id="MF_01572"/>
    </source>
</evidence>
<dbReference type="EMBL" id="CR954253">
    <property type="protein sequence ID" value="CAI98499.1"/>
    <property type="molecule type" value="Genomic_DNA"/>
</dbReference>
<dbReference type="RefSeq" id="WP_003623706.1">
    <property type="nucleotide sequence ID" value="NZ_JQAV01000002.1"/>
</dbReference>
<dbReference type="SMR" id="Q1G8W8"/>
<dbReference type="STRING" id="390333.Ldb1710"/>
<dbReference type="KEGG" id="ldb:Ldb1710"/>
<dbReference type="PATRIC" id="fig|390333.13.peg.915"/>
<dbReference type="eggNOG" id="COG4720">
    <property type="taxonomic scope" value="Bacteria"/>
</dbReference>
<dbReference type="HOGENOM" id="CLU_120023_0_0_9"/>
<dbReference type="BioCyc" id="LDEL390333:LDB_RS07400-MONOMER"/>
<dbReference type="Proteomes" id="UP000001259">
    <property type="component" value="Chromosome"/>
</dbReference>
<dbReference type="GO" id="GO:0005886">
    <property type="term" value="C:plasma membrane"/>
    <property type="evidence" value="ECO:0007669"/>
    <property type="project" value="UniProtKB-SubCell"/>
</dbReference>
<dbReference type="Gene3D" id="1.10.1760.20">
    <property type="match status" value="1"/>
</dbReference>
<dbReference type="HAMAP" id="MF_01572">
    <property type="entry name" value="UPF0397"/>
    <property type="match status" value="1"/>
</dbReference>
<dbReference type="InterPro" id="IPR009825">
    <property type="entry name" value="ECF_substrate-spec-like"/>
</dbReference>
<dbReference type="InterPro" id="IPR022914">
    <property type="entry name" value="UPF0397"/>
</dbReference>
<dbReference type="NCBIfam" id="NF010182">
    <property type="entry name" value="PRK13661.1"/>
    <property type="match status" value="1"/>
</dbReference>
<dbReference type="PANTHER" id="PTHR37815">
    <property type="entry name" value="UPF0397 PROTEIN BC_2624-RELATED"/>
    <property type="match status" value="1"/>
</dbReference>
<dbReference type="PANTHER" id="PTHR37815:SF3">
    <property type="entry name" value="UPF0397 PROTEIN SPR0429"/>
    <property type="match status" value="1"/>
</dbReference>
<dbReference type="Pfam" id="PF07155">
    <property type="entry name" value="ECF-ribofla_trS"/>
    <property type="match status" value="1"/>
</dbReference>
<accession>Q1G8W8</accession>
<proteinExistence type="inferred from homology"/>
<sequence>MNKDMWKLSPKNIAALGIGSAVFVIVGRFASIPSGLPNTNFELVYAFLAMIAMIYGPTVGFGVGFIGHVLLDLMMYGQTWWNWNFAAGFLGFFIGLYALRVNIDQGEFSAKEMVIFNVVQVVANAIVWFLLGSVGDMVLNSEPAAKVFAQAGLTTLMDGLTIAVLGTILLKLYAGSRVKKGSLHKD</sequence>